<sequence>MTYLRIALASNKRKGSFVLRNSMAALSLSTSGFKFLLAYSSARAIFKLFANCKWAGCFFDLSKEMRKDMLVVNFRFFFKFYSSTKMHIRKQIIINIRHRRKFVIVFFFFSFSLSISCVQKFFLPPKSFVPRDIEKK</sequence>
<feature type="chain" id="PRO_0000202863" description="Putative uncharacterized protein YGR265W">
    <location>
        <begin position="1"/>
        <end position="136"/>
    </location>
</feature>
<feature type="transmembrane region" description="Helical" evidence="1">
    <location>
        <begin position="102"/>
        <end position="118"/>
    </location>
</feature>
<comment type="subcellular location">
    <subcellularLocation>
        <location evidence="2">Membrane</location>
        <topology evidence="2">Single-pass membrane protein</topology>
    </subcellularLocation>
</comment>
<comment type="miscellaneous">
    <text evidence="2">Partially overlaps MES1.</text>
</comment>
<comment type="caution">
    <text evidence="3">Product of a dubious gene prediction unlikely to encode a functional protein. Because of that it is not part of the S.cerevisiae S288c complete/reference proteome set.</text>
</comment>
<keyword id="KW-0472">Membrane</keyword>
<keyword id="KW-0812">Transmembrane</keyword>
<keyword id="KW-1133">Transmembrane helix</keyword>
<accession>P53325</accession>
<name>YG5K_YEAST</name>
<gene>
    <name type="ordered locus">YGR265W</name>
</gene>
<proteinExistence type="uncertain"/>
<organism>
    <name type="scientific">Saccharomyces cerevisiae (strain ATCC 204508 / S288c)</name>
    <name type="common">Baker's yeast</name>
    <dbReference type="NCBI Taxonomy" id="559292"/>
    <lineage>
        <taxon>Eukaryota</taxon>
        <taxon>Fungi</taxon>
        <taxon>Dikarya</taxon>
        <taxon>Ascomycota</taxon>
        <taxon>Saccharomycotina</taxon>
        <taxon>Saccharomycetes</taxon>
        <taxon>Saccharomycetales</taxon>
        <taxon>Saccharomycetaceae</taxon>
        <taxon>Saccharomyces</taxon>
    </lineage>
</organism>
<evidence type="ECO:0000255" key="1"/>
<evidence type="ECO:0000305" key="2"/>
<evidence type="ECO:0000305" key="3">
    <source>
    </source>
</evidence>
<reference key="1">
    <citation type="journal article" date="1997" name="Yeast">
        <title>Analysis of an 11.6 kb region from the right arm of chromosome VII of Saccharomyces cerevisiae between the RAD2 and the MES1 genes reveals the presence of three new genes.</title>
        <authorList>
            <person name="Clemente M.L."/>
            <person name="Sartori G."/>
            <person name="Cardazzo B."/>
            <person name="Carignani G."/>
        </authorList>
    </citation>
    <scope>NUCLEOTIDE SEQUENCE [GENOMIC DNA]</scope>
    <source>
        <strain>ATCC 96604 / S288c / FY1679</strain>
    </source>
</reference>
<reference key="2">
    <citation type="journal article" date="1997" name="Nature">
        <title>The nucleotide sequence of Saccharomyces cerevisiae chromosome VII.</title>
        <authorList>
            <person name="Tettelin H."/>
            <person name="Agostoni-Carbone M.L."/>
            <person name="Albermann K."/>
            <person name="Albers M."/>
            <person name="Arroyo J."/>
            <person name="Backes U."/>
            <person name="Barreiros T."/>
            <person name="Bertani I."/>
            <person name="Bjourson A.J."/>
            <person name="Brueckner M."/>
            <person name="Bruschi C.V."/>
            <person name="Carignani G."/>
            <person name="Castagnoli L."/>
            <person name="Cerdan E."/>
            <person name="Clemente M.L."/>
            <person name="Coblenz A."/>
            <person name="Coglievina M."/>
            <person name="Coissac E."/>
            <person name="Defoor E."/>
            <person name="Del Bino S."/>
            <person name="Delius H."/>
            <person name="Delneri D."/>
            <person name="de Wergifosse P."/>
            <person name="Dujon B."/>
            <person name="Durand P."/>
            <person name="Entian K.-D."/>
            <person name="Eraso P."/>
            <person name="Escribano V."/>
            <person name="Fabiani L."/>
            <person name="Fartmann B."/>
            <person name="Feroli F."/>
            <person name="Feuermann M."/>
            <person name="Frontali L."/>
            <person name="Garcia-Gonzalez M."/>
            <person name="Garcia-Saez M.I."/>
            <person name="Goffeau A."/>
            <person name="Guerreiro P."/>
            <person name="Hani J."/>
            <person name="Hansen M."/>
            <person name="Hebling U."/>
            <person name="Hernandez K."/>
            <person name="Heumann K."/>
            <person name="Hilger F."/>
            <person name="Hofmann B."/>
            <person name="Indge K.J."/>
            <person name="James C.M."/>
            <person name="Klima R."/>
            <person name="Koetter P."/>
            <person name="Kramer B."/>
            <person name="Kramer W."/>
            <person name="Lauquin G."/>
            <person name="Leuther H."/>
            <person name="Louis E.J."/>
            <person name="Maillier E."/>
            <person name="Marconi A."/>
            <person name="Martegani E."/>
            <person name="Mazon M.J."/>
            <person name="Mazzoni C."/>
            <person name="McReynolds A.D.K."/>
            <person name="Melchioretto P."/>
            <person name="Mewes H.-W."/>
            <person name="Minenkova O."/>
            <person name="Mueller-Auer S."/>
            <person name="Nawrocki A."/>
            <person name="Netter P."/>
            <person name="Neu R."/>
            <person name="Nombela C."/>
            <person name="Oliver S.G."/>
            <person name="Panzeri L."/>
            <person name="Paoluzi S."/>
            <person name="Plevani P."/>
            <person name="Portetelle D."/>
            <person name="Portillo F."/>
            <person name="Potier S."/>
            <person name="Purnelle B."/>
            <person name="Rieger M."/>
            <person name="Riles L."/>
            <person name="Rinaldi T."/>
            <person name="Robben J."/>
            <person name="Rodrigues-Pousada C."/>
            <person name="Rodriguez-Belmonte E."/>
            <person name="Rodriguez-Torres A.M."/>
            <person name="Rose M."/>
            <person name="Ruzzi M."/>
            <person name="Saliola M."/>
            <person name="Sanchez-Perez M."/>
            <person name="Schaefer B."/>
            <person name="Schaefer M."/>
            <person name="Scharfe M."/>
            <person name="Schmidheini T."/>
            <person name="Schreer A."/>
            <person name="Skala J."/>
            <person name="Souciet J.-L."/>
            <person name="Steensma H.Y."/>
            <person name="Talla E."/>
            <person name="Thierry A."/>
            <person name="Vandenbol M."/>
            <person name="van der Aart Q.J.M."/>
            <person name="Van Dyck L."/>
            <person name="Vanoni M."/>
            <person name="Verhasselt P."/>
            <person name="Voet M."/>
            <person name="Volckaert G."/>
            <person name="Wambutt R."/>
            <person name="Watson M.D."/>
            <person name="Weber N."/>
            <person name="Wedler E."/>
            <person name="Wedler H."/>
            <person name="Wipfli P."/>
            <person name="Wolf K."/>
            <person name="Wright L.F."/>
            <person name="Zaccaria P."/>
            <person name="Zimmermann M."/>
            <person name="Zollner A."/>
            <person name="Kleine K."/>
        </authorList>
    </citation>
    <scope>NUCLEOTIDE SEQUENCE [LARGE SCALE GENOMIC DNA]</scope>
    <source>
        <strain>ATCC 204508 / S288c</strain>
    </source>
</reference>
<reference key="3">
    <citation type="journal article" date="2014" name="G3 (Bethesda)">
        <title>The reference genome sequence of Saccharomyces cerevisiae: Then and now.</title>
        <authorList>
            <person name="Engel S.R."/>
            <person name="Dietrich F.S."/>
            <person name="Fisk D.G."/>
            <person name="Binkley G."/>
            <person name="Balakrishnan R."/>
            <person name="Costanzo M.C."/>
            <person name="Dwight S.S."/>
            <person name="Hitz B.C."/>
            <person name="Karra K."/>
            <person name="Nash R.S."/>
            <person name="Weng S."/>
            <person name="Wong E.D."/>
            <person name="Lloyd P."/>
            <person name="Skrzypek M.S."/>
            <person name="Miyasato S.R."/>
            <person name="Simison M."/>
            <person name="Cherry J.M."/>
        </authorList>
    </citation>
    <scope>GENOME REANNOTATION</scope>
    <source>
        <strain>ATCC 204508 / S288c</strain>
    </source>
</reference>
<reference key="4">
    <citation type="journal article" date="2007" name="Genome Res.">
        <title>Approaching a complete repository of sequence-verified protein-encoding clones for Saccharomyces cerevisiae.</title>
        <authorList>
            <person name="Hu Y."/>
            <person name="Rolfs A."/>
            <person name="Bhullar B."/>
            <person name="Murthy T.V.S."/>
            <person name="Zhu C."/>
            <person name="Berger M.F."/>
            <person name="Camargo A.A."/>
            <person name="Kelley F."/>
            <person name="McCarron S."/>
            <person name="Jepson D."/>
            <person name="Richardson A."/>
            <person name="Raphael J."/>
            <person name="Moreira D."/>
            <person name="Taycher E."/>
            <person name="Zuo D."/>
            <person name="Mohr S."/>
            <person name="Kane M.F."/>
            <person name="Williamson J."/>
            <person name="Simpson A.J.G."/>
            <person name="Bulyk M.L."/>
            <person name="Harlow E."/>
            <person name="Marsischky G."/>
            <person name="Kolodner R.D."/>
            <person name="LaBaer J."/>
        </authorList>
    </citation>
    <scope>NUCLEOTIDE SEQUENCE [GENOMIC DNA]</scope>
    <source>
        <strain>ATCC 204508 / S288c</strain>
    </source>
</reference>
<dbReference type="EMBL" id="Y07777">
    <property type="protein sequence ID" value="CAA69087.1"/>
    <property type="molecule type" value="Genomic_DNA"/>
</dbReference>
<dbReference type="EMBL" id="Z73049">
    <property type="protein sequence ID" value="CAA97294.1"/>
    <property type="molecule type" value="Genomic_DNA"/>
</dbReference>
<dbReference type="EMBL" id="AY693337">
    <property type="protein sequence ID" value="AAT93356.1"/>
    <property type="molecule type" value="Genomic_DNA"/>
</dbReference>
<dbReference type="PIR" id="S64598">
    <property type="entry name" value="S64598"/>
</dbReference>
<dbReference type="PaxDb" id="4932-YGR265W"/>
<dbReference type="EnsemblFungi" id="YGR265W_mRNA">
    <property type="protein sequence ID" value="YGR265W"/>
    <property type="gene ID" value="YGR265W"/>
</dbReference>
<dbReference type="AGR" id="SGD:S000003497"/>
<dbReference type="SGD" id="S000003497">
    <property type="gene designation" value="YGR265W"/>
</dbReference>
<dbReference type="HOGENOM" id="CLU_1877064_0_0_1"/>
<dbReference type="GO" id="GO:0016020">
    <property type="term" value="C:membrane"/>
    <property type="evidence" value="ECO:0007669"/>
    <property type="project" value="UniProtKB-SubCell"/>
</dbReference>
<protein>
    <recommendedName>
        <fullName>Putative uncharacterized protein YGR265W</fullName>
    </recommendedName>
</protein>